<proteinExistence type="inferred from homology"/>
<sequence length="294" mass="32250">MEDYTKAEILIEALPYICKFHDQKILIKYGGHAMVNEQAKNWIAKDLVLLKYVGINPIVVHGGGPEINRAMEKMGKTPEFIHGLRVTDEETLDIVKMVLIGKINGDIVSKLERYGGKSVGLSGKSGQLIKAKKKIQYLMKDSQKIEVDLGMVGEVEHVDTKLIDILVEKRYIPVISPIGVDHQGNDLNLNADIAAGDIAGAMNAQKLIMVTDVDGIMDDVNDPSTLHRRLTIPQIEDMIEKGLITGGMIPKIEACVNALDKGVQSVHIVNGKTPHAVLLEIFTEDGVGTMVVRE</sequence>
<keyword id="KW-0028">Amino-acid biosynthesis</keyword>
<keyword id="KW-0055">Arginine biosynthesis</keyword>
<keyword id="KW-0067">ATP-binding</keyword>
<keyword id="KW-0963">Cytoplasm</keyword>
<keyword id="KW-0418">Kinase</keyword>
<keyword id="KW-0547">Nucleotide-binding</keyword>
<keyword id="KW-1185">Reference proteome</keyword>
<keyword id="KW-0808">Transferase</keyword>
<accession>Q6M154</accession>
<gene>
    <name evidence="1" type="primary">argB</name>
    <name type="ordered locus">MMP0063</name>
</gene>
<dbReference type="EC" id="2.7.2.8" evidence="1"/>
<dbReference type="EMBL" id="BX950229">
    <property type="protein sequence ID" value="CAF29619.1"/>
    <property type="molecule type" value="Genomic_DNA"/>
</dbReference>
<dbReference type="RefSeq" id="WP_011170007.1">
    <property type="nucleotide sequence ID" value="NC_005791.1"/>
</dbReference>
<dbReference type="SMR" id="Q6M154"/>
<dbReference type="STRING" id="267377.MMP0063"/>
<dbReference type="EnsemblBacteria" id="CAF29619">
    <property type="protein sequence ID" value="CAF29619"/>
    <property type="gene ID" value="MMP0063"/>
</dbReference>
<dbReference type="GeneID" id="2762120"/>
<dbReference type="KEGG" id="mmp:MMP0063"/>
<dbReference type="PATRIC" id="fig|267377.15.peg.64"/>
<dbReference type="eggNOG" id="arCOG00862">
    <property type="taxonomic scope" value="Archaea"/>
</dbReference>
<dbReference type="HOGENOM" id="CLU_053680_0_0_2"/>
<dbReference type="OrthoDB" id="6816at2157"/>
<dbReference type="UniPathway" id="UPA00068">
    <property type="reaction ID" value="UER00107"/>
</dbReference>
<dbReference type="Proteomes" id="UP000000590">
    <property type="component" value="Chromosome"/>
</dbReference>
<dbReference type="GO" id="GO:0005737">
    <property type="term" value="C:cytoplasm"/>
    <property type="evidence" value="ECO:0007669"/>
    <property type="project" value="UniProtKB-SubCell"/>
</dbReference>
<dbReference type="GO" id="GO:0003991">
    <property type="term" value="F:acetylglutamate kinase activity"/>
    <property type="evidence" value="ECO:0007669"/>
    <property type="project" value="UniProtKB-UniRule"/>
</dbReference>
<dbReference type="GO" id="GO:0005524">
    <property type="term" value="F:ATP binding"/>
    <property type="evidence" value="ECO:0007669"/>
    <property type="project" value="UniProtKB-UniRule"/>
</dbReference>
<dbReference type="GO" id="GO:0042450">
    <property type="term" value="P:arginine biosynthetic process via ornithine"/>
    <property type="evidence" value="ECO:0007669"/>
    <property type="project" value="UniProtKB-UniRule"/>
</dbReference>
<dbReference type="GO" id="GO:0006526">
    <property type="term" value="P:L-arginine biosynthetic process"/>
    <property type="evidence" value="ECO:0007669"/>
    <property type="project" value="UniProtKB-UniPathway"/>
</dbReference>
<dbReference type="CDD" id="cd04250">
    <property type="entry name" value="AAK_NAGK-C"/>
    <property type="match status" value="1"/>
</dbReference>
<dbReference type="FunFam" id="3.40.1160.10:FF:000004">
    <property type="entry name" value="Acetylglutamate kinase"/>
    <property type="match status" value="1"/>
</dbReference>
<dbReference type="Gene3D" id="3.40.1160.10">
    <property type="entry name" value="Acetylglutamate kinase-like"/>
    <property type="match status" value="1"/>
</dbReference>
<dbReference type="HAMAP" id="MF_00082">
    <property type="entry name" value="ArgB"/>
    <property type="match status" value="1"/>
</dbReference>
<dbReference type="InterPro" id="IPR036393">
    <property type="entry name" value="AceGlu_kinase-like_sf"/>
</dbReference>
<dbReference type="InterPro" id="IPR004662">
    <property type="entry name" value="AcgluKinase_fam"/>
</dbReference>
<dbReference type="InterPro" id="IPR037528">
    <property type="entry name" value="ArgB"/>
</dbReference>
<dbReference type="InterPro" id="IPR001048">
    <property type="entry name" value="Asp/Glu/Uridylate_kinase"/>
</dbReference>
<dbReference type="InterPro" id="IPR001057">
    <property type="entry name" value="Glu/AcGlu_kinase"/>
</dbReference>
<dbReference type="InterPro" id="IPR041727">
    <property type="entry name" value="NAGK-C"/>
</dbReference>
<dbReference type="NCBIfam" id="TIGR00761">
    <property type="entry name" value="argB"/>
    <property type="match status" value="1"/>
</dbReference>
<dbReference type="PANTHER" id="PTHR23342">
    <property type="entry name" value="N-ACETYLGLUTAMATE SYNTHASE"/>
    <property type="match status" value="1"/>
</dbReference>
<dbReference type="PANTHER" id="PTHR23342:SF0">
    <property type="entry name" value="N-ACETYLGLUTAMATE SYNTHASE, MITOCHONDRIAL"/>
    <property type="match status" value="1"/>
</dbReference>
<dbReference type="Pfam" id="PF00696">
    <property type="entry name" value="AA_kinase"/>
    <property type="match status" value="1"/>
</dbReference>
<dbReference type="PIRSF" id="PIRSF000728">
    <property type="entry name" value="NAGK"/>
    <property type="match status" value="1"/>
</dbReference>
<dbReference type="PRINTS" id="PR00474">
    <property type="entry name" value="GLU5KINASE"/>
</dbReference>
<dbReference type="SUPFAM" id="SSF53633">
    <property type="entry name" value="Carbamate kinase-like"/>
    <property type="match status" value="1"/>
</dbReference>
<name>ARGB_METMP</name>
<comment type="function">
    <text evidence="1">Catalyzes the ATP-dependent phosphorylation of N-acetyl-L-glutamate.</text>
</comment>
<comment type="catalytic activity">
    <reaction evidence="1">
        <text>N-acetyl-L-glutamate + ATP = N-acetyl-L-glutamyl 5-phosphate + ADP</text>
        <dbReference type="Rhea" id="RHEA:14629"/>
        <dbReference type="ChEBI" id="CHEBI:30616"/>
        <dbReference type="ChEBI" id="CHEBI:44337"/>
        <dbReference type="ChEBI" id="CHEBI:57936"/>
        <dbReference type="ChEBI" id="CHEBI:456216"/>
        <dbReference type="EC" id="2.7.2.8"/>
    </reaction>
</comment>
<comment type="pathway">
    <text evidence="1">Amino-acid biosynthesis; L-arginine biosynthesis; N(2)-acetyl-L-ornithine from L-glutamate: step 2/4.</text>
</comment>
<comment type="subcellular location">
    <subcellularLocation>
        <location evidence="1">Cytoplasm</location>
    </subcellularLocation>
</comment>
<comment type="similarity">
    <text evidence="1">Belongs to the acetylglutamate kinase family. ArgB subfamily.</text>
</comment>
<organism>
    <name type="scientific">Methanococcus maripaludis (strain DSM 14266 / JCM 13030 / NBRC 101832 / S2 / LL)</name>
    <dbReference type="NCBI Taxonomy" id="267377"/>
    <lineage>
        <taxon>Archaea</taxon>
        <taxon>Methanobacteriati</taxon>
        <taxon>Methanobacteriota</taxon>
        <taxon>Methanomada group</taxon>
        <taxon>Methanococci</taxon>
        <taxon>Methanococcales</taxon>
        <taxon>Methanococcaceae</taxon>
        <taxon>Methanococcus</taxon>
    </lineage>
</organism>
<evidence type="ECO:0000255" key="1">
    <source>
        <dbReference type="HAMAP-Rule" id="MF_00082"/>
    </source>
</evidence>
<reference key="1">
    <citation type="journal article" date="2004" name="J. Bacteriol.">
        <title>Complete genome sequence of the genetically tractable hydrogenotrophic methanogen Methanococcus maripaludis.</title>
        <authorList>
            <person name="Hendrickson E.L."/>
            <person name="Kaul R."/>
            <person name="Zhou Y."/>
            <person name="Bovee D."/>
            <person name="Chapman P."/>
            <person name="Chung J."/>
            <person name="Conway de Macario E."/>
            <person name="Dodsworth J.A."/>
            <person name="Gillett W."/>
            <person name="Graham D.E."/>
            <person name="Hackett M."/>
            <person name="Haydock A.K."/>
            <person name="Kang A."/>
            <person name="Land M.L."/>
            <person name="Levy R."/>
            <person name="Lie T.J."/>
            <person name="Major T.A."/>
            <person name="Moore B.C."/>
            <person name="Porat I."/>
            <person name="Palmeiri A."/>
            <person name="Rouse G."/>
            <person name="Saenphimmachak C."/>
            <person name="Soell D."/>
            <person name="Van Dien S."/>
            <person name="Wang T."/>
            <person name="Whitman W.B."/>
            <person name="Xia Q."/>
            <person name="Zhang Y."/>
            <person name="Larimer F.W."/>
            <person name="Olson M.V."/>
            <person name="Leigh J.A."/>
        </authorList>
    </citation>
    <scope>NUCLEOTIDE SEQUENCE [LARGE SCALE GENOMIC DNA]</scope>
    <source>
        <strain>DSM 14266 / JCM 13030 / NBRC 101832 / S2 / LL</strain>
    </source>
</reference>
<feature type="chain" id="PRO_0000112697" description="Acetylglutamate kinase">
    <location>
        <begin position="1"/>
        <end position="294"/>
    </location>
</feature>
<feature type="binding site" evidence="1">
    <location>
        <begin position="63"/>
        <end position="64"/>
    </location>
    <ligand>
        <name>substrate</name>
    </ligand>
</feature>
<feature type="binding site" evidence="1">
    <location>
        <position position="85"/>
    </location>
    <ligand>
        <name>substrate</name>
    </ligand>
</feature>
<feature type="binding site" evidence="1">
    <location>
        <position position="188"/>
    </location>
    <ligand>
        <name>substrate</name>
    </ligand>
</feature>
<feature type="site" description="Transition state stabilizer" evidence="1">
    <location>
        <position position="28"/>
    </location>
</feature>
<feature type="site" description="Transition state stabilizer" evidence="1">
    <location>
        <position position="251"/>
    </location>
</feature>
<protein>
    <recommendedName>
        <fullName evidence="1">Acetylglutamate kinase</fullName>
        <ecNumber evidence="1">2.7.2.8</ecNumber>
    </recommendedName>
    <alternativeName>
        <fullName evidence="1">N-acetyl-L-glutamate 5-phosphotransferase</fullName>
    </alternativeName>
    <alternativeName>
        <fullName evidence="1">NAG kinase</fullName>
        <shortName evidence="1">NAGK</shortName>
    </alternativeName>
</protein>